<protein>
    <recommendedName>
        <fullName>Uncharacterized protein YaiA</fullName>
    </recommendedName>
</protein>
<dbReference type="EMBL" id="AE014075">
    <property type="protein sequence ID" value="AAN78974.1"/>
    <property type="molecule type" value="Genomic_DNA"/>
</dbReference>
<dbReference type="RefSeq" id="WP_001142439.1">
    <property type="nucleotide sequence ID" value="NZ_CP051263.1"/>
</dbReference>
<dbReference type="BMRB" id="P0AAN6"/>
<dbReference type="SMR" id="P0AAN6"/>
<dbReference type="STRING" id="199310.c0496"/>
<dbReference type="GeneID" id="93777072"/>
<dbReference type="KEGG" id="ecc:c0496"/>
<dbReference type="eggNOG" id="ENOG5032ZKT">
    <property type="taxonomic scope" value="Bacteria"/>
</dbReference>
<dbReference type="HOGENOM" id="CLU_195275_0_0_6"/>
<dbReference type="BioCyc" id="ECOL199310:C0496-MONOMER"/>
<dbReference type="Proteomes" id="UP000001410">
    <property type="component" value="Chromosome"/>
</dbReference>
<dbReference type="Gene3D" id="3.30.730.30">
    <property type="entry name" value="YaiA protein"/>
    <property type="match status" value="1"/>
</dbReference>
<dbReference type="InterPro" id="IPR032303">
    <property type="entry name" value="YaiA"/>
</dbReference>
<dbReference type="InterPro" id="IPR038462">
    <property type="entry name" value="YaiA-like_sf"/>
</dbReference>
<dbReference type="NCBIfam" id="NF007698">
    <property type="entry name" value="PRK10380.1"/>
    <property type="match status" value="1"/>
</dbReference>
<dbReference type="Pfam" id="PF16362">
    <property type="entry name" value="YaiA"/>
    <property type="match status" value="1"/>
</dbReference>
<organism>
    <name type="scientific">Escherichia coli O6:H1 (strain CFT073 / ATCC 700928 / UPEC)</name>
    <dbReference type="NCBI Taxonomy" id="199310"/>
    <lineage>
        <taxon>Bacteria</taxon>
        <taxon>Pseudomonadati</taxon>
        <taxon>Pseudomonadota</taxon>
        <taxon>Gammaproteobacteria</taxon>
        <taxon>Enterobacterales</taxon>
        <taxon>Enterobacteriaceae</taxon>
        <taxon>Escherichia</taxon>
    </lineage>
</organism>
<feature type="chain" id="PRO_0000168583" description="Uncharacterized protein YaiA">
    <location>
        <begin position="1"/>
        <end position="63"/>
    </location>
</feature>
<feature type="region of interest" description="Disordered" evidence="1">
    <location>
        <begin position="35"/>
        <end position="63"/>
    </location>
</feature>
<feature type="compositionally biased region" description="Basic and acidic residues" evidence="1">
    <location>
        <begin position="51"/>
        <end position="63"/>
    </location>
</feature>
<name>YAIA_ECOL6</name>
<proteinExistence type="predicted"/>
<evidence type="ECO:0000256" key="1">
    <source>
        <dbReference type="SAM" id="MobiDB-lite"/>
    </source>
</evidence>
<gene>
    <name type="primary">yaiA</name>
    <name type="ordered locus">c0496</name>
</gene>
<keyword id="KW-1185">Reference proteome</keyword>
<accession>P0AAN6</accession>
<accession>P08366</accession>
<reference key="1">
    <citation type="journal article" date="2002" name="Proc. Natl. Acad. Sci. U.S.A.">
        <title>Extensive mosaic structure revealed by the complete genome sequence of uropathogenic Escherichia coli.</title>
        <authorList>
            <person name="Welch R.A."/>
            <person name="Burland V."/>
            <person name="Plunkett G. III"/>
            <person name="Redford P."/>
            <person name="Roesch P."/>
            <person name="Rasko D."/>
            <person name="Buckles E.L."/>
            <person name="Liou S.-R."/>
            <person name="Boutin A."/>
            <person name="Hackett J."/>
            <person name="Stroud D."/>
            <person name="Mayhew G.F."/>
            <person name="Rose D.J."/>
            <person name="Zhou S."/>
            <person name="Schwartz D.C."/>
            <person name="Perna N.T."/>
            <person name="Mobley H.L.T."/>
            <person name="Donnenberg M.S."/>
            <person name="Blattner F.R."/>
        </authorList>
    </citation>
    <scope>NUCLEOTIDE SEQUENCE [LARGE SCALE GENOMIC DNA]</scope>
    <source>
        <strain>CFT073 / ATCC 700928 / UPEC</strain>
    </source>
</reference>
<sequence length="63" mass="7281">MPTKPPYPREAYIVTIEKGKPGQTVTWYQLRADHPKPDSLISEHPTAQEAMDAKKRYEDPDKE</sequence>